<proteinExistence type="inferred from homology"/>
<protein>
    <recommendedName>
        <fullName evidence="1">ATP synthase subunit b</fullName>
    </recommendedName>
    <alternativeName>
        <fullName evidence="1">ATP synthase F(0) sector subunit b</fullName>
    </alternativeName>
    <alternativeName>
        <fullName evidence="1">ATPase subunit I</fullName>
    </alternativeName>
    <alternativeName>
        <fullName evidence="1">F-type ATPase subunit b</fullName>
        <shortName evidence="1">F-ATPase subunit b</shortName>
    </alternativeName>
</protein>
<evidence type="ECO:0000255" key="1">
    <source>
        <dbReference type="HAMAP-Rule" id="MF_01398"/>
    </source>
</evidence>
<evidence type="ECO:0000305" key="2"/>
<reference key="1">
    <citation type="submission" date="2006-08" db="EMBL/GenBank/DDBJ databases">
        <title>Complete sequence of Alkalilimnicola ehrilichei MLHE-1.</title>
        <authorList>
            <person name="Copeland A."/>
            <person name="Lucas S."/>
            <person name="Lapidus A."/>
            <person name="Barry K."/>
            <person name="Detter J.C."/>
            <person name="Glavina del Rio T."/>
            <person name="Hammon N."/>
            <person name="Israni S."/>
            <person name="Dalin E."/>
            <person name="Tice H."/>
            <person name="Pitluck S."/>
            <person name="Sims D."/>
            <person name="Brettin T."/>
            <person name="Bruce D."/>
            <person name="Han C."/>
            <person name="Tapia R."/>
            <person name="Gilna P."/>
            <person name="Schmutz J."/>
            <person name="Larimer F."/>
            <person name="Land M."/>
            <person name="Hauser L."/>
            <person name="Kyrpides N."/>
            <person name="Mikhailova N."/>
            <person name="Oremland R.S."/>
            <person name="Hoeft S.E."/>
            <person name="Switzer-Blum J."/>
            <person name="Kulp T."/>
            <person name="King G."/>
            <person name="Tabita R."/>
            <person name="Witte B."/>
            <person name="Santini J.M."/>
            <person name="Basu P."/>
            <person name="Hollibaugh J.T."/>
            <person name="Xie G."/>
            <person name="Stolz J.F."/>
            <person name="Richardson P."/>
        </authorList>
    </citation>
    <scope>NUCLEOTIDE SEQUENCE [LARGE SCALE GENOMIC DNA]</scope>
    <source>
        <strain>ATCC BAA-1101 / DSM 17681 / MLHE-1</strain>
    </source>
</reference>
<sequence length="156" mass="17670">MNFGATFWGPMISFALFVWFTMKYVWPPIQTAMADRQKQIADGLAAGERGQKELDQAKSEVDKMLREAREQASQVIAQANKRQSELVEQAREEARQEAERVLAQARSEIDTEISQARDALRKEVVNLAVAGSSRILKREIDAKAHKDLIDDLVKQL</sequence>
<feature type="chain" id="PRO_0000368305" description="ATP synthase subunit b">
    <location>
        <begin position="1"/>
        <end position="156"/>
    </location>
</feature>
<feature type="transmembrane region" description="Helical" evidence="1">
    <location>
        <begin position="4"/>
        <end position="26"/>
    </location>
</feature>
<dbReference type="EMBL" id="CP000453">
    <property type="protein sequence ID" value="ABI58213.1"/>
    <property type="status" value="ALT_INIT"/>
    <property type="molecule type" value="Genomic_DNA"/>
</dbReference>
<dbReference type="RefSeq" id="WP_041718098.1">
    <property type="nucleotide sequence ID" value="NC_008340.1"/>
</dbReference>
<dbReference type="SMR" id="Q0A4M4"/>
<dbReference type="KEGG" id="aeh:Mlg_2873"/>
<dbReference type="eggNOG" id="COG0711">
    <property type="taxonomic scope" value="Bacteria"/>
</dbReference>
<dbReference type="HOGENOM" id="CLU_079215_4_5_6"/>
<dbReference type="OrthoDB" id="9788020at2"/>
<dbReference type="Proteomes" id="UP000001962">
    <property type="component" value="Chromosome"/>
</dbReference>
<dbReference type="GO" id="GO:0005886">
    <property type="term" value="C:plasma membrane"/>
    <property type="evidence" value="ECO:0007669"/>
    <property type="project" value="UniProtKB-SubCell"/>
</dbReference>
<dbReference type="GO" id="GO:0045259">
    <property type="term" value="C:proton-transporting ATP synthase complex"/>
    <property type="evidence" value="ECO:0007669"/>
    <property type="project" value="UniProtKB-KW"/>
</dbReference>
<dbReference type="GO" id="GO:0046933">
    <property type="term" value="F:proton-transporting ATP synthase activity, rotational mechanism"/>
    <property type="evidence" value="ECO:0007669"/>
    <property type="project" value="UniProtKB-UniRule"/>
</dbReference>
<dbReference type="GO" id="GO:0046961">
    <property type="term" value="F:proton-transporting ATPase activity, rotational mechanism"/>
    <property type="evidence" value="ECO:0007669"/>
    <property type="project" value="TreeGrafter"/>
</dbReference>
<dbReference type="CDD" id="cd06503">
    <property type="entry name" value="ATP-synt_Fo_b"/>
    <property type="match status" value="1"/>
</dbReference>
<dbReference type="FunFam" id="1.20.5.620:FF:000001">
    <property type="entry name" value="ATP synthase subunit b"/>
    <property type="match status" value="1"/>
</dbReference>
<dbReference type="Gene3D" id="1.20.5.620">
    <property type="entry name" value="F1F0 ATP synthase subunit B, membrane domain"/>
    <property type="match status" value="1"/>
</dbReference>
<dbReference type="HAMAP" id="MF_01398">
    <property type="entry name" value="ATP_synth_b_bprime"/>
    <property type="match status" value="1"/>
</dbReference>
<dbReference type="InterPro" id="IPR028987">
    <property type="entry name" value="ATP_synth_B-like_membr_sf"/>
</dbReference>
<dbReference type="InterPro" id="IPR002146">
    <property type="entry name" value="ATP_synth_b/b'su_bac/chlpt"/>
</dbReference>
<dbReference type="InterPro" id="IPR005864">
    <property type="entry name" value="ATP_synth_F0_bsu_bac"/>
</dbReference>
<dbReference type="InterPro" id="IPR050059">
    <property type="entry name" value="ATP_synthase_B_chain"/>
</dbReference>
<dbReference type="NCBIfam" id="TIGR01144">
    <property type="entry name" value="ATP_synt_b"/>
    <property type="match status" value="1"/>
</dbReference>
<dbReference type="NCBIfam" id="NF004411">
    <property type="entry name" value="PRK05759.1-2"/>
    <property type="match status" value="1"/>
</dbReference>
<dbReference type="PANTHER" id="PTHR33445:SF1">
    <property type="entry name" value="ATP SYNTHASE SUBUNIT B"/>
    <property type="match status" value="1"/>
</dbReference>
<dbReference type="PANTHER" id="PTHR33445">
    <property type="entry name" value="ATP SYNTHASE SUBUNIT B', CHLOROPLASTIC"/>
    <property type="match status" value="1"/>
</dbReference>
<dbReference type="Pfam" id="PF00430">
    <property type="entry name" value="ATP-synt_B"/>
    <property type="match status" value="1"/>
</dbReference>
<dbReference type="SUPFAM" id="SSF81573">
    <property type="entry name" value="F1F0 ATP synthase subunit B, membrane domain"/>
    <property type="match status" value="1"/>
</dbReference>
<name>ATPF_ALKEH</name>
<keyword id="KW-0066">ATP synthesis</keyword>
<keyword id="KW-0997">Cell inner membrane</keyword>
<keyword id="KW-1003">Cell membrane</keyword>
<keyword id="KW-0138">CF(0)</keyword>
<keyword id="KW-0375">Hydrogen ion transport</keyword>
<keyword id="KW-0406">Ion transport</keyword>
<keyword id="KW-0472">Membrane</keyword>
<keyword id="KW-1185">Reference proteome</keyword>
<keyword id="KW-0812">Transmembrane</keyword>
<keyword id="KW-1133">Transmembrane helix</keyword>
<keyword id="KW-0813">Transport</keyword>
<gene>
    <name evidence="1" type="primary">atpF</name>
    <name type="ordered locus">Mlg_2873</name>
</gene>
<accession>Q0A4M4</accession>
<comment type="function">
    <text evidence="1">F(1)F(0) ATP synthase produces ATP from ADP in the presence of a proton or sodium gradient. F-type ATPases consist of two structural domains, F(1) containing the extramembraneous catalytic core and F(0) containing the membrane proton channel, linked together by a central stalk and a peripheral stalk. During catalysis, ATP synthesis in the catalytic domain of F(1) is coupled via a rotary mechanism of the central stalk subunits to proton translocation.</text>
</comment>
<comment type="function">
    <text evidence="1">Component of the F(0) channel, it forms part of the peripheral stalk, linking F(1) to F(0).</text>
</comment>
<comment type="subunit">
    <text evidence="1">F-type ATPases have 2 components, F(1) - the catalytic core - and F(0) - the membrane proton channel. F(1) has five subunits: alpha(3), beta(3), gamma(1), delta(1), epsilon(1). F(0) has three main subunits: a(1), b(2) and c(10-14). The alpha and beta chains form an alternating ring which encloses part of the gamma chain. F(1) is attached to F(0) by a central stalk formed by the gamma and epsilon chains, while a peripheral stalk is formed by the delta and b chains.</text>
</comment>
<comment type="subcellular location">
    <subcellularLocation>
        <location evidence="1">Cell inner membrane</location>
        <topology evidence="1">Single-pass membrane protein</topology>
    </subcellularLocation>
</comment>
<comment type="similarity">
    <text evidence="1">Belongs to the ATPase B chain family.</text>
</comment>
<comment type="sequence caution" evidence="2">
    <conflict type="erroneous initiation">
        <sequence resource="EMBL-CDS" id="ABI58213"/>
    </conflict>
</comment>
<organism>
    <name type="scientific">Alkalilimnicola ehrlichii (strain ATCC BAA-1101 / DSM 17681 / MLHE-1)</name>
    <dbReference type="NCBI Taxonomy" id="187272"/>
    <lineage>
        <taxon>Bacteria</taxon>
        <taxon>Pseudomonadati</taxon>
        <taxon>Pseudomonadota</taxon>
        <taxon>Gammaproteobacteria</taxon>
        <taxon>Chromatiales</taxon>
        <taxon>Ectothiorhodospiraceae</taxon>
        <taxon>Alkalilimnicola</taxon>
    </lineage>
</organism>